<organism>
    <name type="scientific">Staphylococcus aureus (strain Mu3 / ATCC 700698)</name>
    <dbReference type="NCBI Taxonomy" id="418127"/>
    <lineage>
        <taxon>Bacteria</taxon>
        <taxon>Bacillati</taxon>
        <taxon>Bacillota</taxon>
        <taxon>Bacilli</taxon>
        <taxon>Bacillales</taxon>
        <taxon>Staphylococcaceae</taxon>
        <taxon>Staphylococcus</taxon>
    </lineage>
</organism>
<evidence type="ECO:0000255" key="1">
    <source>
        <dbReference type="HAMAP-Rule" id="MF_01235"/>
    </source>
</evidence>
<reference key="1">
    <citation type="journal article" date="2008" name="Antimicrob. Agents Chemother.">
        <title>Mutated response regulator graR is responsible for phenotypic conversion of Staphylococcus aureus from heterogeneous vancomycin-intermediate resistance to vancomycin-intermediate resistance.</title>
        <authorList>
            <person name="Neoh H.-M."/>
            <person name="Cui L."/>
            <person name="Yuzawa H."/>
            <person name="Takeuchi F."/>
            <person name="Matsuo M."/>
            <person name="Hiramatsu K."/>
        </authorList>
    </citation>
    <scope>NUCLEOTIDE SEQUENCE [LARGE SCALE GENOMIC DNA]</scope>
    <source>
        <strain>Mu3 / ATCC 700698</strain>
    </source>
</reference>
<name>NANE_STAA1</name>
<proteinExistence type="inferred from homology"/>
<sequence>MLPHGLIVSCQALADEPLHSSFIMSKMALAAYEGGAVGIRANTKEDILAIKETVDLPVIGIVKRDYDHSDVFITATSKEVDELIESQCEVIALDATLQQRPKETLDELVSYIRTHAPNVEIMADIATVEEAKNAARLGFDYIGTTLHGYTSYTQGQLLYQNDFQFLKDVLQSVDAKVIAEGNVITPDMYKRVMDLGVHCSVVGGAITRPKEITKRFVQVMED</sequence>
<keyword id="KW-0119">Carbohydrate metabolism</keyword>
<keyword id="KW-0413">Isomerase</keyword>
<feature type="chain" id="PRO_1000066917" description="Putative N-acetylmannosamine-6-phosphate 2-epimerase">
    <location>
        <begin position="1"/>
        <end position="222"/>
    </location>
</feature>
<protein>
    <recommendedName>
        <fullName evidence="1">Putative N-acetylmannosamine-6-phosphate 2-epimerase</fullName>
        <ecNumber evidence="1">5.1.3.9</ecNumber>
    </recommendedName>
    <alternativeName>
        <fullName evidence="1">ManNAc-6-P epimerase</fullName>
    </alternativeName>
</protein>
<comment type="function">
    <text evidence="1">Converts N-acetylmannosamine-6-phosphate (ManNAc-6-P) to N-acetylglucosamine-6-phosphate (GlcNAc-6-P).</text>
</comment>
<comment type="catalytic activity">
    <reaction evidence="1">
        <text>an N-acyl-D-glucosamine 6-phosphate = an N-acyl-D-mannosamine 6-phosphate</text>
        <dbReference type="Rhea" id="RHEA:23932"/>
        <dbReference type="ChEBI" id="CHEBI:57599"/>
        <dbReference type="ChEBI" id="CHEBI:57666"/>
        <dbReference type="EC" id="5.1.3.9"/>
    </reaction>
</comment>
<comment type="pathway">
    <text evidence="1">Amino-sugar metabolism; N-acetylneuraminate degradation; D-fructose 6-phosphate from N-acetylneuraminate: step 3/5.</text>
</comment>
<comment type="similarity">
    <text evidence="1">Belongs to the NanE family.</text>
</comment>
<accession>A7WXZ6</accession>
<dbReference type="EC" id="5.1.3.9" evidence="1"/>
<dbReference type="EMBL" id="AP009324">
    <property type="protein sequence ID" value="BAF77198.1"/>
    <property type="molecule type" value="Genomic_DNA"/>
</dbReference>
<dbReference type="RefSeq" id="WP_000936718.1">
    <property type="nucleotide sequence ID" value="NC_009782.1"/>
</dbReference>
<dbReference type="SMR" id="A7WXZ6"/>
<dbReference type="KEGG" id="saw:SAHV_0315"/>
<dbReference type="HOGENOM" id="CLU_086300_1_0_9"/>
<dbReference type="UniPathway" id="UPA00629">
    <property type="reaction ID" value="UER00682"/>
</dbReference>
<dbReference type="GO" id="GO:0005829">
    <property type="term" value="C:cytosol"/>
    <property type="evidence" value="ECO:0007669"/>
    <property type="project" value="TreeGrafter"/>
</dbReference>
<dbReference type="GO" id="GO:0047465">
    <property type="term" value="F:N-acylglucosamine-6-phosphate 2-epimerase activity"/>
    <property type="evidence" value="ECO:0007669"/>
    <property type="project" value="UniProtKB-EC"/>
</dbReference>
<dbReference type="GO" id="GO:0005975">
    <property type="term" value="P:carbohydrate metabolic process"/>
    <property type="evidence" value="ECO:0007669"/>
    <property type="project" value="UniProtKB-UniRule"/>
</dbReference>
<dbReference type="GO" id="GO:0006053">
    <property type="term" value="P:N-acetylmannosamine catabolic process"/>
    <property type="evidence" value="ECO:0007669"/>
    <property type="project" value="TreeGrafter"/>
</dbReference>
<dbReference type="GO" id="GO:0019262">
    <property type="term" value="P:N-acetylneuraminate catabolic process"/>
    <property type="evidence" value="ECO:0007669"/>
    <property type="project" value="UniProtKB-UniRule"/>
</dbReference>
<dbReference type="CDD" id="cd04729">
    <property type="entry name" value="NanE"/>
    <property type="match status" value="1"/>
</dbReference>
<dbReference type="FunFam" id="3.20.20.70:FF:000035">
    <property type="entry name" value="Putative N-acetylmannosamine-6-phosphate 2-epimerase"/>
    <property type="match status" value="1"/>
</dbReference>
<dbReference type="Gene3D" id="3.20.20.70">
    <property type="entry name" value="Aldolase class I"/>
    <property type="match status" value="1"/>
</dbReference>
<dbReference type="HAMAP" id="MF_01235">
    <property type="entry name" value="ManNAc6P_epimer"/>
    <property type="match status" value="1"/>
</dbReference>
<dbReference type="InterPro" id="IPR013785">
    <property type="entry name" value="Aldolase_TIM"/>
</dbReference>
<dbReference type="InterPro" id="IPR007260">
    <property type="entry name" value="NanE"/>
</dbReference>
<dbReference type="InterPro" id="IPR011060">
    <property type="entry name" value="RibuloseP-bd_barrel"/>
</dbReference>
<dbReference type="NCBIfam" id="NF002231">
    <property type="entry name" value="PRK01130.1"/>
    <property type="match status" value="1"/>
</dbReference>
<dbReference type="PANTHER" id="PTHR36204">
    <property type="entry name" value="N-ACETYLMANNOSAMINE-6-PHOSPHATE 2-EPIMERASE-RELATED"/>
    <property type="match status" value="1"/>
</dbReference>
<dbReference type="PANTHER" id="PTHR36204:SF1">
    <property type="entry name" value="N-ACETYLMANNOSAMINE-6-PHOSPHATE 2-EPIMERASE-RELATED"/>
    <property type="match status" value="1"/>
</dbReference>
<dbReference type="Pfam" id="PF04131">
    <property type="entry name" value="NanE"/>
    <property type="match status" value="1"/>
</dbReference>
<dbReference type="SUPFAM" id="SSF51366">
    <property type="entry name" value="Ribulose-phoshate binding barrel"/>
    <property type="match status" value="1"/>
</dbReference>
<gene>
    <name evidence="1" type="primary">nanE</name>
    <name type="ordered locus">SAHV_0315</name>
</gene>